<comment type="function">
    <text evidence="1">Provides the (R)-glutamate required for cell wall biosynthesis.</text>
</comment>
<comment type="catalytic activity">
    <reaction evidence="1">
        <text>L-glutamate = D-glutamate</text>
        <dbReference type="Rhea" id="RHEA:12813"/>
        <dbReference type="ChEBI" id="CHEBI:29985"/>
        <dbReference type="ChEBI" id="CHEBI:29986"/>
        <dbReference type="EC" id="5.1.1.3"/>
    </reaction>
</comment>
<comment type="pathway">
    <text evidence="1">Cell wall biogenesis; peptidoglycan biosynthesis.</text>
</comment>
<comment type="similarity">
    <text evidence="1">Belongs to the aspartate/glutamate racemases family.</text>
</comment>
<protein>
    <recommendedName>
        <fullName evidence="1">Glutamate racemase</fullName>
        <ecNumber evidence="1">5.1.1.3</ecNumber>
    </recommendedName>
</protein>
<reference key="1">
    <citation type="journal article" date="1997" name="Nature">
        <title>Genomic sequence of a Lyme disease spirochaete, Borrelia burgdorferi.</title>
        <authorList>
            <person name="Fraser C.M."/>
            <person name="Casjens S."/>
            <person name="Huang W.M."/>
            <person name="Sutton G.G."/>
            <person name="Clayton R.A."/>
            <person name="Lathigra R."/>
            <person name="White O."/>
            <person name="Ketchum K.A."/>
            <person name="Dodson R.J."/>
            <person name="Hickey E.K."/>
            <person name="Gwinn M.L."/>
            <person name="Dougherty B.A."/>
            <person name="Tomb J.-F."/>
            <person name="Fleischmann R.D."/>
            <person name="Richardson D.L."/>
            <person name="Peterson J.D."/>
            <person name="Kerlavage A.R."/>
            <person name="Quackenbush J."/>
            <person name="Salzberg S.L."/>
            <person name="Hanson M."/>
            <person name="van Vugt R."/>
            <person name="Palmer N."/>
            <person name="Adams M.D."/>
            <person name="Gocayne J.D."/>
            <person name="Weidman J.F."/>
            <person name="Utterback T.R."/>
            <person name="Watthey L."/>
            <person name="McDonald L.A."/>
            <person name="Artiach P."/>
            <person name="Bowman C."/>
            <person name="Garland S.A."/>
            <person name="Fujii C."/>
            <person name="Cotton M.D."/>
            <person name="Horst K."/>
            <person name="Roberts K.M."/>
            <person name="Hatch B."/>
            <person name="Smith H.O."/>
            <person name="Venter J.C."/>
        </authorList>
    </citation>
    <scope>NUCLEOTIDE SEQUENCE [LARGE SCALE GENOMIC DNA]</scope>
    <source>
        <strain>ATCC 35210 / DSM 4680 / CIP 102532 / B31</strain>
    </source>
</reference>
<name>MURI_BORBU</name>
<organism>
    <name type="scientific">Borreliella burgdorferi (strain ATCC 35210 / DSM 4680 / CIP 102532 / B31)</name>
    <name type="common">Borrelia burgdorferi</name>
    <dbReference type="NCBI Taxonomy" id="224326"/>
    <lineage>
        <taxon>Bacteria</taxon>
        <taxon>Pseudomonadati</taxon>
        <taxon>Spirochaetota</taxon>
        <taxon>Spirochaetia</taxon>
        <taxon>Spirochaetales</taxon>
        <taxon>Borreliaceae</taxon>
        <taxon>Borreliella</taxon>
    </lineage>
</organism>
<gene>
    <name evidence="1" type="primary">murI</name>
    <name type="ordered locus">BB_0100</name>
</gene>
<keyword id="KW-0133">Cell shape</keyword>
<keyword id="KW-0961">Cell wall biogenesis/degradation</keyword>
<keyword id="KW-0413">Isomerase</keyword>
<keyword id="KW-0573">Peptidoglycan synthesis</keyword>
<keyword id="KW-1185">Reference proteome</keyword>
<sequence length="261" mass="30330">MKNFKEVIIIFDSGIGGLSYFKYIKSRIGGCQYVYVADNKNFPYGEKSPEYLLEAVLFLIEKLKKIYNIGALVLACNTISVSVYNKLNFVFPVVYTLPDVSSVSDLVLKRVLLIATNTTLESKFVKDQVNIHNDLIVKAAGELVNFVEYGENYKKYALRCLEALKFEVVNTGREIVFLGCTHYLHLKVMIEDFLKIPVYENRELVVKNLIRSMNFSEHKGNYYKNDFDFVDDEFYLTENKNLTFYQNFCKKYNLRFKGMIV</sequence>
<dbReference type="EC" id="5.1.1.3" evidence="1"/>
<dbReference type="EMBL" id="AE000783">
    <property type="protein sequence ID" value="AAC66479.1"/>
    <property type="molecule type" value="Genomic_DNA"/>
</dbReference>
<dbReference type="PIR" id="D70112">
    <property type="entry name" value="D70112"/>
</dbReference>
<dbReference type="RefSeq" id="NP_212234.1">
    <property type="nucleotide sequence ID" value="NC_001318.1"/>
</dbReference>
<dbReference type="RefSeq" id="WP_010889682.1">
    <property type="nucleotide sequence ID" value="NC_001318.1"/>
</dbReference>
<dbReference type="SMR" id="O51127"/>
<dbReference type="STRING" id="224326.BB_0100"/>
<dbReference type="PaxDb" id="224326-BB_0100"/>
<dbReference type="EnsemblBacteria" id="AAC66479">
    <property type="protein sequence ID" value="AAC66479"/>
    <property type="gene ID" value="BB_0100"/>
</dbReference>
<dbReference type="GeneID" id="56568118"/>
<dbReference type="KEGG" id="bbu:BB_0100"/>
<dbReference type="PATRIC" id="fig|224326.49.peg.498"/>
<dbReference type="HOGENOM" id="CLU_052344_2_2_12"/>
<dbReference type="OrthoDB" id="9801055at2"/>
<dbReference type="UniPathway" id="UPA00219"/>
<dbReference type="Proteomes" id="UP000001807">
    <property type="component" value="Chromosome"/>
</dbReference>
<dbReference type="GO" id="GO:0008881">
    <property type="term" value="F:glutamate racemase activity"/>
    <property type="evidence" value="ECO:0007669"/>
    <property type="project" value="UniProtKB-UniRule"/>
</dbReference>
<dbReference type="GO" id="GO:0071555">
    <property type="term" value="P:cell wall organization"/>
    <property type="evidence" value="ECO:0007669"/>
    <property type="project" value="UniProtKB-KW"/>
</dbReference>
<dbReference type="GO" id="GO:0009252">
    <property type="term" value="P:peptidoglycan biosynthetic process"/>
    <property type="evidence" value="ECO:0007669"/>
    <property type="project" value="UniProtKB-UniRule"/>
</dbReference>
<dbReference type="GO" id="GO:0008360">
    <property type="term" value="P:regulation of cell shape"/>
    <property type="evidence" value="ECO:0007669"/>
    <property type="project" value="UniProtKB-KW"/>
</dbReference>
<dbReference type="Gene3D" id="3.40.50.1860">
    <property type="match status" value="2"/>
</dbReference>
<dbReference type="HAMAP" id="MF_00258">
    <property type="entry name" value="Glu_racemase"/>
    <property type="match status" value="1"/>
</dbReference>
<dbReference type="InterPro" id="IPR001920">
    <property type="entry name" value="Asp/Glu_race"/>
</dbReference>
<dbReference type="InterPro" id="IPR004391">
    <property type="entry name" value="Glu_race"/>
</dbReference>
<dbReference type="NCBIfam" id="TIGR00067">
    <property type="entry name" value="glut_race"/>
    <property type="match status" value="1"/>
</dbReference>
<dbReference type="PANTHER" id="PTHR21198:SF7">
    <property type="entry name" value="ASPARTATE-GLUTAMATE RACEMASE FAMILY"/>
    <property type="match status" value="1"/>
</dbReference>
<dbReference type="PANTHER" id="PTHR21198">
    <property type="entry name" value="GLUTAMATE RACEMASE"/>
    <property type="match status" value="1"/>
</dbReference>
<dbReference type="SUPFAM" id="SSF53681">
    <property type="entry name" value="Aspartate/glutamate racemase"/>
    <property type="match status" value="2"/>
</dbReference>
<feature type="chain" id="PRO_0000095456" description="Glutamate racemase">
    <location>
        <begin position="1"/>
        <end position="261"/>
    </location>
</feature>
<feature type="active site" description="Proton donor/acceptor" evidence="1">
    <location>
        <position position="76"/>
    </location>
</feature>
<feature type="active site" description="Proton donor/acceptor" evidence="1">
    <location>
        <position position="180"/>
    </location>
</feature>
<feature type="binding site" evidence="1">
    <location>
        <begin position="12"/>
        <end position="13"/>
    </location>
    <ligand>
        <name>substrate</name>
    </ligand>
</feature>
<feature type="binding site" evidence="1">
    <location>
        <begin position="44"/>
        <end position="45"/>
    </location>
    <ligand>
        <name>substrate</name>
    </ligand>
</feature>
<feature type="binding site" evidence="1">
    <location>
        <begin position="77"/>
        <end position="78"/>
    </location>
    <ligand>
        <name>substrate</name>
    </ligand>
</feature>
<feature type="binding site" evidence="1">
    <location>
        <begin position="181"/>
        <end position="182"/>
    </location>
    <ligand>
        <name>substrate</name>
    </ligand>
</feature>
<proteinExistence type="inferred from homology"/>
<accession>O51127</accession>
<evidence type="ECO:0000255" key="1">
    <source>
        <dbReference type="HAMAP-Rule" id="MF_00258"/>
    </source>
</evidence>